<reference key="1">
    <citation type="journal article" date="2007" name="Proc. Natl. Acad. Sci. U.S.A.">
        <title>Genomic and metabolic adaptations of Methanobrevibacter smithii to the human gut.</title>
        <authorList>
            <person name="Samuel B.S."/>
            <person name="Hansen E.E."/>
            <person name="Manchester J.K."/>
            <person name="Coutinho P.M."/>
            <person name="Henrissat B."/>
            <person name="Fulton R."/>
            <person name="Latreille P."/>
            <person name="Kim K."/>
            <person name="Wilson R.K."/>
            <person name="Gordon J.I."/>
        </authorList>
    </citation>
    <scope>NUCLEOTIDE SEQUENCE [LARGE SCALE GENOMIC DNA]</scope>
    <source>
        <strain>ATCC 35061 / DSM 861 / OCM 144 / PS</strain>
    </source>
</reference>
<keyword id="KW-0328">Glycosyltransferase</keyword>
<keyword id="KW-0479">Metal-binding</keyword>
<keyword id="KW-0808">Transferase</keyword>
<keyword id="KW-0819">tRNA processing</keyword>
<keyword id="KW-0862">Zinc</keyword>
<proteinExistence type="inferred from homology"/>
<comment type="function">
    <text evidence="1">Exchanges the guanine residue with 7-cyano-7-deazaguanine (preQ0) at position 15 in the dihydrouridine loop (D-loop) of archaeal tRNAs.</text>
</comment>
<comment type="catalytic activity">
    <reaction evidence="1">
        <text>guanosine(15) in tRNA + 7-cyano-7-deazaguanine = 7-cyano-7-carbaguanosine(15) in tRNA + guanine</text>
        <dbReference type="Rhea" id="RHEA:43164"/>
        <dbReference type="Rhea" id="RHEA-COMP:10371"/>
        <dbReference type="Rhea" id="RHEA-COMP:10372"/>
        <dbReference type="ChEBI" id="CHEBI:16235"/>
        <dbReference type="ChEBI" id="CHEBI:45075"/>
        <dbReference type="ChEBI" id="CHEBI:74269"/>
        <dbReference type="ChEBI" id="CHEBI:82850"/>
        <dbReference type="EC" id="2.4.2.48"/>
    </reaction>
</comment>
<comment type="cofactor">
    <cofactor evidence="1">
        <name>Zn(2+)</name>
        <dbReference type="ChEBI" id="CHEBI:29105"/>
    </cofactor>
    <text evidence="1">Binds 1 zinc ion per subunit.</text>
</comment>
<comment type="pathway">
    <text evidence="1">tRNA modification; archaeosine-tRNA biosynthesis.</text>
</comment>
<comment type="similarity">
    <text evidence="1">Belongs to the archaeosine tRNA-ribosyltransferase family.</text>
</comment>
<organism>
    <name type="scientific">Methanobrevibacter smithii (strain ATCC 35061 / DSM 861 / OCM 144 / PS)</name>
    <dbReference type="NCBI Taxonomy" id="420247"/>
    <lineage>
        <taxon>Archaea</taxon>
        <taxon>Methanobacteriati</taxon>
        <taxon>Methanobacteriota</taxon>
        <taxon>Methanomada group</taxon>
        <taxon>Methanobacteria</taxon>
        <taxon>Methanobacteriales</taxon>
        <taxon>Methanobacteriaceae</taxon>
        <taxon>Methanobrevibacter</taxon>
    </lineage>
</organism>
<accession>A5UNI4</accession>
<gene>
    <name evidence="1" type="primary">tgtA</name>
    <name type="ordered locus">Msm_1557</name>
</gene>
<protein>
    <recommendedName>
        <fullName evidence="1">tRNA-guanine(15) transglycosylase</fullName>
        <ecNumber evidence="1">2.4.2.48</ecNumber>
    </recommendedName>
    <alternativeName>
        <fullName evidence="1">7-cyano-7-deazaguanine tRNA-ribosyltransferase</fullName>
    </alternativeName>
    <alternativeName>
        <fullName evidence="1">Archaeal tRNA-guanine transglycosylase</fullName>
    </alternativeName>
</protein>
<evidence type="ECO:0000255" key="1">
    <source>
        <dbReference type="HAMAP-Rule" id="MF_01634"/>
    </source>
</evidence>
<sequence length="659" mass="74780">MFEIKAKDNRGRVGVLKTNSGDVKTPNLMPVIHPRKQTIDVKKYGADIVITNAYLIYKDEDLKKKAAEIGLHKLINFDGPIMTDSGSFQLSVYGDVDITNKEVIEFQELIKTDIGTSLDIPTAPFVTREKAEADLEVTLERAKEAVDYRNSQNMEMKLNSVVQGSTFPDLRRKCADELTKLDADLYPIGAVVPLMESYHYKELVDVVMNSVAHLPDSKPRHLMGAGHPMIFALAVAMGCDLFDSAAYILYAEDDRLLSVRGTYKLENLQEMPCSCEVCCNYTPDDLRAMPKEKRRDLIAQHNLNVSFAELRLIRQAIYEGSLMELVEERCRAHPNLLEALRQLGNYSKDLEKYDPRSKKSAFFYTGSESLYRSEVLRHIQKLRAMPRKRDLVILPPSRKPYSKYVSSKLGNFYVYGSEQELDLNNTDFMVLDIPFGLIPLEIDEIYPLSQNESPRTWDVSSLEFIEDFISEFVEYYDQVLIHSNVIKKLDIGLYNIHSQSDEIRYAKDDLKKVKAIADYQFGVGAGDALFAGNIKIEKSKKTGKIRHIYDGKTLIVNMRASDSFLILSKEGAKRLHAATQYPKNRVVVNKDSEPFSLEGKSVFAKFVVECDEDIRAKDEVLIVNEEDKLLAYGKALLGACEINDFQTGQAIKTRKGMKK</sequence>
<dbReference type="EC" id="2.4.2.48" evidence="1"/>
<dbReference type="EMBL" id="CP000678">
    <property type="protein sequence ID" value="ABQ87762.1"/>
    <property type="molecule type" value="Genomic_DNA"/>
</dbReference>
<dbReference type="RefSeq" id="WP_011954592.1">
    <property type="nucleotide sequence ID" value="NZ_CP117965.1"/>
</dbReference>
<dbReference type="SMR" id="A5UNI4"/>
<dbReference type="STRING" id="420247.Msm_1557"/>
<dbReference type="EnsemblBacteria" id="ABQ87762">
    <property type="protein sequence ID" value="ABQ87762"/>
    <property type="gene ID" value="Msm_1557"/>
</dbReference>
<dbReference type="GeneID" id="78818196"/>
<dbReference type="KEGG" id="msi:Msm_1557"/>
<dbReference type="PATRIC" id="fig|420247.28.peg.1547"/>
<dbReference type="eggNOG" id="arCOG00989">
    <property type="taxonomic scope" value="Archaea"/>
</dbReference>
<dbReference type="eggNOG" id="arCOG00991">
    <property type="taxonomic scope" value="Archaea"/>
</dbReference>
<dbReference type="HOGENOM" id="CLU_030083_0_0_2"/>
<dbReference type="UniPathway" id="UPA00393"/>
<dbReference type="Proteomes" id="UP000001992">
    <property type="component" value="Chromosome"/>
</dbReference>
<dbReference type="GO" id="GO:0005737">
    <property type="term" value="C:cytoplasm"/>
    <property type="evidence" value="ECO:0007669"/>
    <property type="project" value="TreeGrafter"/>
</dbReference>
<dbReference type="GO" id="GO:0016763">
    <property type="term" value="F:pentosyltransferase activity"/>
    <property type="evidence" value="ECO:0007669"/>
    <property type="project" value="UniProtKB-UniRule"/>
</dbReference>
<dbReference type="GO" id="GO:0003723">
    <property type="term" value="F:RNA binding"/>
    <property type="evidence" value="ECO:0007669"/>
    <property type="project" value="InterPro"/>
</dbReference>
<dbReference type="GO" id="GO:0008270">
    <property type="term" value="F:zinc ion binding"/>
    <property type="evidence" value="ECO:0007669"/>
    <property type="project" value="UniProtKB-UniRule"/>
</dbReference>
<dbReference type="GO" id="GO:0002099">
    <property type="term" value="P:tRNA wobble guanine modification"/>
    <property type="evidence" value="ECO:0007669"/>
    <property type="project" value="TreeGrafter"/>
</dbReference>
<dbReference type="CDD" id="cd21149">
    <property type="entry name" value="PUA_archaeosine_TGT"/>
    <property type="match status" value="1"/>
</dbReference>
<dbReference type="Gene3D" id="3.10.450.90">
    <property type="entry name" value="ArcTGT, C2 domain"/>
    <property type="match status" value="1"/>
</dbReference>
<dbReference type="Gene3D" id="2.30.130.10">
    <property type="entry name" value="PUA domain"/>
    <property type="match status" value="1"/>
</dbReference>
<dbReference type="Gene3D" id="3.20.20.105">
    <property type="entry name" value="Queuine tRNA-ribosyltransferase-like"/>
    <property type="match status" value="1"/>
</dbReference>
<dbReference type="HAMAP" id="MF_01634">
    <property type="entry name" value="TgtA_arch"/>
    <property type="match status" value="1"/>
</dbReference>
<dbReference type="InterPro" id="IPR050076">
    <property type="entry name" value="ArchSynthase1/Queuine_TRR"/>
</dbReference>
<dbReference type="InterPro" id="IPR040777">
    <property type="entry name" value="DUF5591"/>
</dbReference>
<dbReference type="InterPro" id="IPR002478">
    <property type="entry name" value="PUA"/>
</dbReference>
<dbReference type="InterPro" id="IPR015947">
    <property type="entry name" value="PUA-like_sf"/>
</dbReference>
<dbReference type="InterPro" id="IPR036974">
    <property type="entry name" value="PUA_sf"/>
</dbReference>
<dbReference type="InterPro" id="IPR036511">
    <property type="entry name" value="TGT-like_sf"/>
</dbReference>
<dbReference type="InterPro" id="IPR029402">
    <property type="entry name" value="TGT_C2"/>
</dbReference>
<dbReference type="InterPro" id="IPR038250">
    <property type="entry name" value="TGT_C2_sf"/>
</dbReference>
<dbReference type="InterPro" id="IPR004804">
    <property type="entry name" value="TgtA"/>
</dbReference>
<dbReference type="InterPro" id="IPR002616">
    <property type="entry name" value="tRNA_ribo_trans-like"/>
</dbReference>
<dbReference type="InterPro" id="IPR004521">
    <property type="entry name" value="Uncharacterised_CHP00451"/>
</dbReference>
<dbReference type="NCBIfam" id="TIGR00432">
    <property type="entry name" value="arcsn_tRNA_tgt"/>
    <property type="match status" value="1"/>
</dbReference>
<dbReference type="NCBIfam" id="TIGR00449">
    <property type="entry name" value="tgt_general"/>
    <property type="match status" value="1"/>
</dbReference>
<dbReference type="NCBIfam" id="TIGR00451">
    <property type="entry name" value="unchar_dom_2"/>
    <property type="match status" value="1"/>
</dbReference>
<dbReference type="PANTHER" id="PTHR46499">
    <property type="entry name" value="QUEUINE TRNA-RIBOSYLTRANSFERASE"/>
    <property type="match status" value="1"/>
</dbReference>
<dbReference type="PANTHER" id="PTHR46499:SF1">
    <property type="entry name" value="QUEUINE TRNA-RIBOSYLTRANSFERASE"/>
    <property type="match status" value="1"/>
</dbReference>
<dbReference type="Pfam" id="PF17884">
    <property type="entry name" value="DUF5591"/>
    <property type="match status" value="1"/>
</dbReference>
<dbReference type="Pfam" id="PF01472">
    <property type="entry name" value="PUA"/>
    <property type="match status" value="1"/>
</dbReference>
<dbReference type="Pfam" id="PF01702">
    <property type="entry name" value="TGT"/>
    <property type="match status" value="1"/>
</dbReference>
<dbReference type="Pfam" id="PF14810">
    <property type="entry name" value="TGT_C2"/>
    <property type="match status" value="1"/>
</dbReference>
<dbReference type="SMART" id="SM00359">
    <property type="entry name" value="PUA"/>
    <property type="match status" value="1"/>
</dbReference>
<dbReference type="SUPFAM" id="SSF88802">
    <property type="entry name" value="Pre-PUA domain"/>
    <property type="match status" value="1"/>
</dbReference>
<dbReference type="SUPFAM" id="SSF88697">
    <property type="entry name" value="PUA domain-like"/>
    <property type="match status" value="1"/>
</dbReference>
<dbReference type="SUPFAM" id="SSF51713">
    <property type="entry name" value="tRNA-guanine transglycosylase"/>
    <property type="match status" value="1"/>
</dbReference>
<dbReference type="PROSITE" id="PS50890">
    <property type="entry name" value="PUA"/>
    <property type="match status" value="1"/>
</dbReference>
<feature type="chain" id="PRO_0000335807" description="tRNA-guanine(15) transglycosylase">
    <location>
        <begin position="1"/>
        <end position="659"/>
    </location>
</feature>
<feature type="domain" description="PUA" evidence="1">
    <location>
        <begin position="583"/>
        <end position="658"/>
    </location>
</feature>
<feature type="active site" description="Nucleophile" evidence="1">
    <location>
        <position position="84"/>
    </location>
</feature>
<feature type="binding site" evidence="1">
    <location>
        <position position="119"/>
    </location>
    <ligand>
        <name>substrate</name>
    </ligand>
</feature>
<feature type="binding site" evidence="1">
    <location>
        <position position="190"/>
    </location>
    <ligand>
        <name>substrate</name>
    </ligand>
</feature>
<feature type="binding site" evidence="1">
    <location>
        <position position="273"/>
    </location>
    <ligand>
        <name>Zn(2+)</name>
        <dbReference type="ChEBI" id="CHEBI:29105"/>
    </ligand>
</feature>
<feature type="binding site" evidence="1">
    <location>
        <position position="275"/>
    </location>
    <ligand>
        <name>Zn(2+)</name>
        <dbReference type="ChEBI" id="CHEBI:29105"/>
    </ligand>
</feature>
<feature type="binding site" evidence="1">
    <location>
        <position position="278"/>
    </location>
    <ligand>
        <name>Zn(2+)</name>
        <dbReference type="ChEBI" id="CHEBI:29105"/>
    </ligand>
</feature>
<name>ATGT_METS3</name>